<organism>
    <name type="scientific">Acidiphilium cryptum (strain JF-5)</name>
    <dbReference type="NCBI Taxonomy" id="349163"/>
    <lineage>
        <taxon>Bacteria</taxon>
        <taxon>Pseudomonadati</taxon>
        <taxon>Pseudomonadota</taxon>
        <taxon>Alphaproteobacteria</taxon>
        <taxon>Acetobacterales</taxon>
        <taxon>Acidocellaceae</taxon>
        <taxon>Acidiphilium</taxon>
    </lineage>
</organism>
<reference key="1">
    <citation type="submission" date="2007-05" db="EMBL/GenBank/DDBJ databases">
        <title>Complete sequence of chromosome of Acidiphilium cryptum JF-5.</title>
        <authorList>
            <consortium name="US DOE Joint Genome Institute"/>
            <person name="Copeland A."/>
            <person name="Lucas S."/>
            <person name="Lapidus A."/>
            <person name="Barry K."/>
            <person name="Detter J.C."/>
            <person name="Glavina del Rio T."/>
            <person name="Hammon N."/>
            <person name="Israni S."/>
            <person name="Dalin E."/>
            <person name="Tice H."/>
            <person name="Pitluck S."/>
            <person name="Sims D."/>
            <person name="Brettin T."/>
            <person name="Bruce D."/>
            <person name="Han C."/>
            <person name="Schmutz J."/>
            <person name="Larimer F."/>
            <person name="Land M."/>
            <person name="Hauser L."/>
            <person name="Kyrpides N."/>
            <person name="Kim E."/>
            <person name="Magnuson T."/>
            <person name="Richardson P."/>
        </authorList>
    </citation>
    <scope>NUCLEOTIDE SEQUENCE [LARGE SCALE GENOMIC DNA]</scope>
    <source>
        <strain>JF-5</strain>
    </source>
</reference>
<evidence type="ECO:0000255" key="1">
    <source>
        <dbReference type="HAMAP-Rule" id="MF_00358"/>
    </source>
</evidence>
<evidence type="ECO:0000305" key="2"/>
<sequence>MQVLVRDNNVDQALKALKKKLQREGVFREMKLRRHYEKPSERRAREAAEAVRRARKMERKRIEREGF</sequence>
<keyword id="KW-1185">Reference proteome</keyword>
<keyword id="KW-0687">Ribonucleoprotein</keyword>
<keyword id="KW-0689">Ribosomal protein</keyword>
<accession>A5FVG6</accession>
<protein>
    <recommendedName>
        <fullName evidence="1">Small ribosomal subunit protein bS21</fullName>
    </recommendedName>
    <alternativeName>
        <fullName evidence="2">30S ribosomal protein S21</fullName>
    </alternativeName>
</protein>
<gene>
    <name evidence="1" type="primary">rpsU</name>
    <name type="ordered locus">Acry_0373</name>
</gene>
<proteinExistence type="inferred from homology"/>
<name>RS21_ACICJ</name>
<feature type="chain" id="PRO_1000059841" description="Small ribosomal subunit protein bS21">
    <location>
        <begin position="1"/>
        <end position="67"/>
    </location>
</feature>
<comment type="similarity">
    <text evidence="1">Belongs to the bacterial ribosomal protein bS21 family.</text>
</comment>
<dbReference type="EMBL" id="CP000697">
    <property type="protein sequence ID" value="ABQ29598.1"/>
    <property type="molecule type" value="Genomic_DNA"/>
</dbReference>
<dbReference type="RefSeq" id="WP_007421557.1">
    <property type="nucleotide sequence ID" value="NC_009484.1"/>
</dbReference>
<dbReference type="SMR" id="A5FVG6"/>
<dbReference type="STRING" id="349163.Acry_0373"/>
<dbReference type="KEGG" id="acr:Acry_0373"/>
<dbReference type="eggNOG" id="COG0828">
    <property type="taxonomic scope" value="Bacteria"/>
</dbReference>
<dbReference type="HOGENOM" id="CLU_159258_0_1_5"/>
<dbReference type="Proteomes" id="UP000000245">
    <property type="component" value="Chromosome"/>
</dbReference>
<dbReference type="GO" id="GO:1990904">
    <property type="term" value="C:ribonucleoprotein complex"/>
    <property type="evidence" value="ECO:0007669"/>
    <property type="project" value="UniProtKB-KW"/>
</dbReference>
<dbReference type="GO" id="GO:0005840">
    <property type="term" value="C:ribosome"/>
    <property type="evidence" value="ECO:0007669"/>
    <property type="project" value="UniProtKB-KW"/>
</dbReference>
<dbReference type="GO" id="GO:0003735">
    <property type="term" value="F:structural constituent of ribosome"/>
    <property type="evidence" value="ECO:0007669"/>
    <property type="project" value="InterPro"/>
</dbReference>
<dbReference type="GO" id="GO:0006412">
    <property type="term" value="P:translation"/>
    <property type="evidence" value="ECO:0007669"/>
    <property type="project" value="UniProtKB-UniRule"/>
</dbReference>
<dbReference type="Gene3D" id="1.20.5.1150">
    <property type="entry name" value="Ribosomal protein S8"/>
    <property type="match status" value="1"/>
</dbReference>
<dbReference type="HAMAP" id="MF_00358">
    <property type="entry name" value="Ribosomal_bS21"/>
    <property type="match status" value="1"/>
</dbReference>
<dbReference type="InterPro" id="IPR001911">
    <property type="entry name" value="Ribosomal_bS21"/>
</dbReference>
<dbReference type="InterPro" id="IPR018278">
    <property type="entry name" value="Ribosomal_bS21_CS"/>
</dbReference>
<dbReference type="InterPro" id="IPR038380">
    <property type="entry name" value="Ribosomal_bS21_sf"/>
</dbReference>
<dbReference type="NCBIfam" id="TIGR00030">
    <property type="entry name" value="S21p"/>
    <property type="match status" value="1"/>
</dbReference>
<dbReference type="PANTHER" id="PTHR21109">
    <property type="entry name" value="MITOCHONDRIAL 28S RIBOSOMAL PROTEIN S21"/>
    <property type="match status" value="1"/>
</dbReference>
<dbReference type="PANTHER" id="PTHR21109:SF0">
    <property type="entry name" value="SMALL RIBOSOMAL SUBUNIT PROTEIN BS21M"/>
    <property type="match status" value="1"/>
</dbReference>
<dbReference type="Pfam" id="PF01165">
    <property type="entry name" value="Ribosomal_S21"/>
    <property type="match status" value="1"/>
</dbReference>
<dbReference type="PRINTS" id="PR00976">
    <property type="entry name" value="RIBOSOMALS21"/>
</dbReference>
<dbReference type="PROSITE" id="PS01181">
    <property type="entry name" value="RIBOSOMAL_S21"/>
    <property type="match status" value="1"/>
</dbReference>